<reference key="1">
    <citation type="journal article" date="1999" name="DNA Res.">
        <title>Isolation and characterization of rice MADS box gene homologues and their RFLP mapping.</title>
        <authorList>
            <person name="Shinozuka Y."/>
            <person name="Kojima S."/>
            <person name="Shomura A."/>
            <person name="Ichimura H."/>
            <person name="Yano M."/>
            <person name="Yamamoto K."/>
            <person name="Sasaki T."/>
        </authorList>
    </citation>
    <scope>NUCLEOTIDE SEQUENCE [MRNA]</scope>
    <source>
        <strain>cv. Nipponbare</strain>
        <tissue>Panicle</tissue>
    </source>
</reference>
<reference key="2">
    <citation type="submission" date="2004-02" db="EMBL/GenBank/DDBJ databases">
        <authorList>
            <person name="Yao Q."/>
            <person name="Peng R."/>
            <person name="Xiong A."/>
        </authorList>
    </citation>
    <scope>NUCLEOTIDE SEQUENCE [MRNA]</scope>
</reference>
<reference key="3">
    <citation type="journal article" date="2005" name="Genome Res.">
        <title>Sequence, annotation, and analysis of synteny between rice chromosome 3 and diverged grass species.</title>
        <authorList>
            <consortium name="The rice chromosome 3 sequencing consortium"/>
            <person name="Buell C.R."/>
            <person name="Yuan Q."/>
            <person name="Ouyang S."/>
            <person name="Liu J."/>
            <person name="Zhu W."/>
            <person name="Wang A."/>
            <person name="Maiti R."/>
            <person name="Haas B."/>
            <person name="Wortman J."/>
            <person name="Pertea M."/>
            <person name="Jones K.M."/>
            <person name="Kim M."/>
            <person name="Overton L."/>
            <person name="Tsitrin T."/>
            <person name="Fadrosh D."/>
            <person name="Bera J."/>
            <person name="Weaver B."/>
            <person name="Jin S."/>
            <person name="Johri S."/>
            <person name="Reardon M."/>
            <person name="Webb K."/>
            <person name="Hill J."/>
            <person name="Moffat K."/>
            <person name="Tallon L."/>
            <person name="Van Aken S."/>
            <person name="Lewis M."/>
            <person name="Utterback T."/>
            <person name="Feldblyum T."/>
            <person name="Zismann V."/>
            <person name="Iobst S."/>
            <person name="Hsiao J."/>
            <person name="de Vazeille A.R."/>
            <person name="Salzberg S.L."/>
            <person name="White O."/>
            <person name="Fraser C.M."/>
            <person name="Yu Y."/>
            <person name="Kim H."/>
            <person name="Rambo T."/>
            <person name="Currie J."/>
            <person name="Collura K."/>
            <person name="Kernodle-Thompson S."/>
            <person name="Wei F."/>
            <person name="Kudrna K."/>
            <person name="Ammiraju J.S.S."/>
            <person name="Luo M."/>
            <person name="Goicoechea J.L."/>
            <person name="Wing R.A."/>
            <person name="Henry D."/>
            <person name="Oates R."/>
            <person name="Palmer M."/>
            <person name="Pries G."/>
            <person name="Saski C."/>
            <person name="Simmons J."/>
            <person name="Soderlund C."/>
            <person name="Nelson W."/>
            <person name="de la Bastide M."/>
            <person name="Spiegel L."/>
            <person name="Nascimento L."/>
            <person name="Huang E."/>
            <person name="Preston R."/>
            <person name="Zutavern T."/>
            <person name="Palmer L."/>
            <person name="O'Shaughnessy A."/>
            <person name="Dike S."/>
            <person name="McCombie W.R."/>
            <person name="Minx P."/>
            <person name="Cordum H."/>
            <person name="Wilson R."/>
            <person name="Jin W."/>
            <person name="Lee H.R."/>
            <person name="Jiang J."/>
            <person name="Jackson S."/>
        </authorList>
    </citation>
    <scope>NUCLEOTIDE SEQUENCE [LARGE SCALE GENOMIC DNA]</scope>
    <source>
        <strain>cv. Nipponbare</strain>
    </source>
</reference>
<reference key="4">
    <citation type="journal article" date="2005" name="Nature">
        <title>The map-based sequence of the rice genome.</title>
        <authorList>
            <consortium name="International rice genome sequencing project (IRGSP)"/>
        </authorList>
    </citation>
    <scope>NUCLEOTIDE SEQUENCE [LARGE SCALE GENOMIC DNA]</scope>
    <source>
        <strain>cv. Nipponbare</strain>
    </source>
</reference>
<reference key="5">
    <citation type="journal article" date="2008" name="Nucleic Acids Res.">
        <title>The rice annotation project database (RAP-DB): 2008 update.</title>
        <authorList>
            <consortium name="The rice annotation project (RAP)"/>
        </authorList>
    </citation>
    <scope>GENOME REANNOTATION</scope>
    <source>
        <strain>cv. Nipponbare</strain>
    </source>
</reference>
<reference key="6">
    <citation type="journal article" date="2013" name="Rice">
        <title>Improvement of the Oryza sativa Nipponbare reference genome using next generation sequence and optical map data.</title>
        <authorList>
            <person name="Kawahara Y."/>
            <person name="de la Bastide M."/>
            <person name="Hamilton J.P."/>
            <person name="Kanamori H."/>
            <person name="McCombie W.R."/>
            <person name="Ouyang S."/>
            <person name="Schwartz D.C."/>
            <person name="Tanaka T."/>
            <person name="Wu J."/>
            <person name="Zhou S."/>
            <person name="Childs K.L."/>
            <person name="Davidson R.M."/>
            <person name="Lin H."/>
            <person name="Quesada-Ocampo L."/>
            <person name="Vaillancourt B."/>
            <person name="Sakai H."/>
            <person name="Lee S.S."/>
            <person name="Kim J."/>
            <person name="Numa H."/>
            <person name="Itoh T."/>
            <person name="Buell C.R."/>
            <person name="Matsumoto T."/>
        </authorList>
    </citation>
    <scope>GENOME REANNOTATION</scope>
    <source>
        <strain>cv. Nipponbare</strain>
    </source>
</reference>
<reference key="7">
    <citation type="journal article" date="2002" name="Sex. Plant Reprod.">
        <title>Comparative analysis of rice MADS-box genes expressed during flower development.</title>
        <authorList>
            <person name="Pelucchi A."/>
            <person name="Fornara F."/>
            <person name="Favalli C."/>
            <person name="Masiero S."/>
            <person name="Lago C."/>
            <person name="Pe M.E."/>
            <person name="Colombo L."/>
            <person name="Kater M.M."/>
        </authorList>
        <dbReference type="AGRICOLA" id="IND23308168"/>
    </citation>
    <scope>TISSUE SPECIFICITY</scope>
</reference>
<name>MAD34_ORYSJ</name>
<organism>
    <name type="scientific">Oryza sativa subsp. japonica</name>
    <name type="common">Rice</name>
    <dbReference type="NCBI Taxonomy" id="39947"/>
    <lineage>
        <taxon>Eukaryota</taxon>
        <taxon>Viridiplantae</taxon>
        <taxon>Streptophyta</taxon>
        <taxon>Embryophyta</taxon>
        <taxon>Tracheophyta</taxon>
        <taxon>Spermatophyta</taxon>
        <taxon>Magnoliopsida</taxon>
        <taxon>Liliopsida</taxon>
        <taxon>Poales</taxon>
        <taxon>Poaceae</taxon>
        <taxon>BOP clade</taxon>
        <taxon>Oryzoideae</taxon>
        <taxon>Oryzeae</taxon>
        <taxon>Oryzinae</taxon>
        <taxon>Oryza</taxon>
        <taxon>Oryza sativa</taxon>
    </lineage>
</organism>
<proteinExistence type="evidence at transcript level"/>
<protein>
    <recommendedName>
        <fullName>MADS-box transcription factor 34</fullName>
    </recommendedName>
    <alternativeName>
        <fullName>OsMADS34</fullName>
    </alternativeName>
    <alternativeName>
        <fullName>RMADS212/RMADS217/RMADS221</fullName>
    </alternativeName>
</protein>
<feature type="chain" id="PRO_0000229914" description="MADS-box transcription factor 34">
    <location>
        <begin position="1"/>
        <end position="239"/>
    </location>
</feature>
<feature type="domain" description="MADS-box" evidence="1">
    <location>
        <begin position="1"/>
        <end position="61"/>
    </location>
</feature>
<feature type="domain" description="K-box" evidence="2">
    <location>
        <begin position="88"/>
        <end position="178"/>
    </location>
</feature>
<feature type="region of interest" description="Disordered" evidence="3">
    <location>
        <begin position="179"/>
        <end position="208"/>
    </location>
</feature>
<feature type="sequence conflict" description="In Ref. 2; AAS59823." evidence="5" ref="2">
    <original>M</original>
    <variation>MM</variation>
    <location>
        <position position="1"/>
    </location>
</feature>
<feature type="sequence conflict" description="In Ref. 2; AAS59832." evidence="5" ref="2">
    <original>KL</original>
    <variation>I</variation>
    <location>
        <begin position="171"/>
        <end position="172"/>
    </location>
</feature>
<dbReference type="EMBL" id="AB003324">
    <property type="protein sequence ID" value="BAA81882.1"/>
    <property type="molecule type" value="mRNA"/>
</dbReference>
<dbReference type="EMBL" id="AY551917">
    <property type="protein sequence ID" value="AAS59823.1"/>
    <property type="molecule type" value="mRNA"/>
</dbReference>
<dbReference type="EMBL" id="AY551922">
    <property type="protein sequence ID" value="AAS59828.1"/>
    <property type="molecule type" value="mRNA"/>
</dbReference>
<dbReference type="EMBL" id="AY551926">
    <property type="protein sequence ID" value="AAS59832.1"/>
    <property type="molecule type" value="mRNA"/>
</dbReference>
<dbReference type="EMBL" id="AC092556">
    <property type="protein sequence ID" value="AAR87238.1"/>
    <property type="molecule type" value="Genomic_DNA"/>
</dbReference>
<dbReference type="EMBL" id="AC135225">
    <property type="protein sequence ID" value="AAP68366.1"/>
    <property type="molecule type" value="Genomic_DNA"/>
</dbReference>
<dbReference type="EMBL" id="AF377947">
    <property type="protein sequence ID" value="AAM34397.1"/>
    <property type="molecule type" value="Genomic_DNA"/>
</dbReference>
<dbReference type="EMBL" id="DP000009">
    <property type="protein sequence ID" value="ABF98926.1"/>
    <property type="molecule type" value="Genomic_DNA"/>
</dbReference>
<dbReference type="EMBL" id="AP008209">
    <property type="protein sequence ID" value="BAF13215.1"/>
    <property type="molecule type" value="Genomic_DNA"/>
</dbReference>
<dbReference type="EMBL" id="AP014959">
    <property type="protein sequence ID" value="BAS86430.1"/>
    <property type="molecule type" value="Genomic_DNA"/>
</dbReference>
<dbReference type="RefSeq" id="XP_015631035.1">
    <property type="nucleotide sequence ID" value="XM_015775549.1"/>
</dbReference>
<dbReference type="SMR" id="Q6Q9H6"/>
<dbReference type="FunCoup" id="Q6Q9H6">
    <property type="interactions" value="33"/>
</dbReference>
<dbReference type="STRING" id="39947.Q6Q9H6"/>
<dbReference type="PaxDb" id="39947-Q6Q9H6"/>
<dbReference type="EnsemblPlants" id="Os03t0753100-01">
    <property type="protein sequence ID" value="Os03t0753100-01"/>
    <property type="gene ID" value="Os03g0753100"/>
</dbReference>
<dbReference type="Gramene" id="Os03t0753100-01">
    <property type="protein sequence ID" value="Os03t0753100-01"/>
    <property type="gene ID" value="Os03g0753100"/>
</dbReference>
<dbReference type="KEGG" id="dosa:Os03g0753100"/>
<dbReference type="eggNOG" id="KOG0014">
    <property type="taxonomic scope" value="Eukaryota"/>
</dbReference>
<dbReference type="HOGENOM" id="CLU_053053_0_2_1"/>
<dbReference type="InParanoid" id="Q6Q9H6"/>
<dbReference type="OMA" id="EMQKINH"/>
<dbReference type="OrthoDB" id="1898716at2759"/>
<dbReference type="Proteomes" id="UP000000763">
    <property type="component" value="Chromosome 3"/>
</dbReference>
<dbReference type="Proteomes" id="UP000059680">
    <property type="component" value="Chromosome 3"/>
</dbReference>
<dbReference type="GO" id="GO:0005634">
    <property type="term" value="C:nucleus"/>
    <property type="evidence" value="ECO:0007669"/>
    <property type="project" value="UniProtKB-SubCell"/>
</dbReference>
<dbReference type="GO" id="GO:0000981">
    <property type="term" value="F:DNA-binding transcription factor activity, RNA polymerase II-specific"/>
    <property type="evidence" value="ECO:0000318"/>
    <property type="project" value="GO_Central"/>
</dbReference>
<dbReference type="GO" id="GO:0046983">
    <property type="term" value="F:protein dimerization activity"/>
    <property type="evidence" value="ECO:0007669"/>
    <property type="project" value="InterPro"/>
</dbReference>
<dbReference type="GO" id="GO:0000978">
    <property type="term" value="F:RNA polymerase II cis-regulatory region sequence-specific DNA binding"/>
    <property type="evidence" value="ECO:0000318"/>
    <property type="project" value="GO_Central"/>
</dbReference>
<dbReference type="GO" id="GO:0045944">
    <property type="term" value="P:positive regulation of transcription by RNA polymerase II"/>
    <property type="evidence" value="ECO:0007669"/>
    <property type="project" value="InterPro"/>
</dbReference>
<dbReference type="GO" id="GO:0006357">
    <property type="term" value="P:regulation of transcription by RNA polymerase II"/>
    <property type="evidence" value="ECO:0000318"/>
    <property type="project" value="GO_Central"/>
</dbReference>
<dbReference type="CDD" id="cd00265">
    <property type="entry name" value="MADS_MEF2_like"/>
    <property type="match status" value="1"/>
</dbReference>
<dbReference type="FunFam" id="3.40.1810.10:FF:000029">
    <property type="entry name" value="MADS transcription factor"/>
    <property type="match status" value="1"/>
</dbReference>
<dbReference type="Gene3D" id="3.40.1810.10">
    <property type="entry name" value="Transcription factor, MADS-box"/>
    <property type="match status" value="1"/>
</dbReference>
<dbReference type="InterPro" id="IPR050142">
    <property type="entry name" value="MADS-box/MEF2_TF"/>
</dbReference>
<dbReference type="InterPro" id="IPR033896">
    <property type="entry name" value="MEF2-like_N"/>
</dbReference>
<dbReference type="InterPro" id="IPR002487">
    <property type="entry name" value="TF_Kbox"/>
</dbReference>
<dbReference type="InterPro" id="IPR002100">
    <property type="entry name" value="TF_MADSbox"/>
</dbReference>
<dbReference type="InterPro" id="IPR036879">
    <property type="entry name" value="TF_MADSbox_sf"/>
</dbReference>
<dbReference type="PANTHER" id="PTHR48019">
    <property type="entry name" value="SERUM RESPONSE FACTOR HOMOLOG"/>
    <property type="match status" value="1"/>
</dbReference>
<dbReference type="Pfam" id="PF01486">
    <property type="entry name" value="K-box"/>
    <property type="match status" value="1"/>
</dbReference>
<dbReference type="Pfam" id="PF00319">
    <property type="entry name" value="SRF-TF"/>
    <property type="match status" value="1"/>
</dbReference>
<dbReference type="PRINTS" id="PR00404">
    <property type="entry name" value="MADSDOMAIN"/>
</dbReference>
<dbReference type="SMART" id="SM00432">
    <property type="entry name" value="MADS"/>
    <property type="match status" value="1"/>
</dbReference>
<dbReference type="SUPFAM" id="SSF55455">
    <property type="entry name" value="SRF-like"/>
    <property type="match status" value="1"/>
</dbReference>
<dbReference type="PROSITE" id="PS51297">
    <property type="entry name" value="K_BOX"/>
    <property type="match status" value="1"/>
</dbReference>
<dbReference type="PROSITE" id="PS00350">
    <property type="entry name" value="MADS_BOX_1"/>
    <property type="match status" value="1"/>
</dbReference>
<dbReference type="PROSITE" id="PS50066">
    <property type="entry name" value="MADS_BOX_2"/>
    <property type="match status" value="1"/>
</dbReference>
<sequence length="239" mass="26881">MGRGKVVLQRIENKISRQVTFAKRRNGLLKKAYELSILCDAEVALVLFSHAGRLYQFSSSSNMLKTLERYQRYIYASQDAAAPTSDEMQNNYQEYVNLKAHVEILQQSQRNLLGEDLAPLATNELEQLESQVVRTLKQIRSRKTQVLLDELCDLKRKEQMLQDANRVLKRKLDEIDVEAAPPQPPWNGNCSNGHGGGGGVFSSEPPQPEHFFQALGLHAVDVNQPPAPPPGGYPPEWMA</sequence>
<keyword id="KW-0238">DNA-binding</keyword>
<keyword id="KW-0539">Nucleus</keyword>
<keyword id="KW-1185">Reference proteome</keyword>
<keyword id="KW-0804">Transcription</keyword>
<keyword id="KW-0805">Transcription regulation</keyword>
<accession>Q6Q9H6</accession>
<accession>A0A0P0W370</accession>
<accession>Q10CQ0</accession>
<accession>Q6Q9I5</accession>
<accession>Q9XJ64</accession>
<evidence type="ECO:0000255" key="1">
    <source>
        <dbReference type="PROSITE-ProRule" id="PRU00251"/>
    </source>
</evidence>
<evidence type="ECO:0000255" key="2">
    <source>
        <dbReference type="PROSITE-ProRule" id="PRU00629"/>
    </source>
</evidence>
<evidence type="ECO:0000256" key="3">
    <source>
        <dbReference type="SAM" id="MobiDB-lite"/>
    </source>
</evidence>
<evidence type="ECO:0000269" key="4">
    <source ref="7"/>
</evidence>
<evidence type="ECO:0000305" key="5"/>
<evidence type="ECO:0000312" key="6">
    <source>
        <dbReference type="EMBL" id="ABF98926.1"/>
    </source>
</evidence>
<evidence type="ECO:0000312" key="7">
    <source>
        <dbReference type="EMBL" id="BAF13215.1"/>
    </source>
</evidence>
<comment type="function">
    <text>Probable transcription factor.</text>
</comment>
<comment type="subcellular location">
    <subcellularLocation>
        <location evidence="5">Nucleus</location>
    </subcellularLocation>
</comment>
<comment type="tissue specificity">
    <text evidence="4">Highly expressed in leaves and at low levels in roots and spikelets (rice flower).</text>
</comment>
<gene>
    <name type="primary">MADS34</name>
    <name evidence="7" type="ordered locus">Os03g0753100</name>
    <name evidence="6" type="ordered locus">LOC_Os03g54170</name>
    <name type="ORF">OJ1112_G08.14</name>
    <name type="ORF">OSJNBa0032E21.03</name>
    <name type="ORF">OSJNBa0047E24.1</name>
</gene>